<proteinExistence type="inferred from homology"/>
<reference key="1">
    <citation type="journal article" date="2010" name="Genome Biol. Evol.">
        <title>Continuing evolution of Burkholderia mallei through genome reduction and large-scale rearrangements.</title>
        <authorList>
            <person name="Losada L."/>
            <person name="Ronning C.M."/>
            <person name="DeShazer D."/>
            <person name="Woods D."/>
            <person name="Fedorova N."/>
            <person name="Kim H.S."/>
            <person name="Shabalina S.A."/>
            <person name="Pearson T.R."/>
            <person name="Brinkac L."/>
            <person name="Tan P."/>
            <person name="Nandi T."/>
            <person name="Crabtree J."/>
            <person name="Badger J."/>
            <person name="Beckstrom-Sternberg S."/>
            <person name="Saqib M."/>
            <person name="Schutzer S.E."/>
            <person name="Keim P."/>
            <person name="Nierman W.C."/>
        </authorList>
    </citation>
    <scope>NUCLEOTIDE SEQUENCE [LARGE SCALE GENOMIC DNA]</scope>
    <source>
        <strain>668</strain>
    </source>
</reference>
<organism>
    <name type="scientific">Burkholderia pseudomallei (strain 668)</name>
    <dbReference type="NCBI Taxonomy" id="320373"/>
    <lineage>
        <taxon>Bacteria</taxon>
        <taxon>Pseudomonadati</taxon>
        <taxon>Pseudomonadota</taxon>
        <taxon>Betaproteobacteria</taxon>
        <taxon>Burkholderiales</taxon>
        <taxon>Burkholderiaceae</taxon>
        <taxon>Burkholderia</taxon>
        <taxon>pseudomallei group</taxon>
    </lineage>
</organism>
<evidence type="ECO:0000255" key="1">
    <source>
        <dbReference type="HAMAP-Rule" id="MF_01274"/>
    </source>
</evidence>
<protein>
    <recommendedName>
        <fullName evidence="1">Type III pantothenate kinase</fullName>
        <ecNumber evidence="1">2.7.1.33</ecNumber>
    </recommendedName>
    <alternativeName>
        <fullName evidence="1">PanK-III</fullName>
    </alternativeName>
    <alternativeName>
        <fullName evidence="1">Pantothenic acid kinase</fullName>
    </alternativeName>
</protein>
<accession>A3N559</accession>
<dbReference type="EC" id="2.7.1.33" evidence="1"/>
<dbReference type="EMBL" id="CP000570">
    <property type="protein sequence ID" value="ABN83979.1"/>
    <property type="molecule type" value="Genomic_DNA"/>
</dbReference>
<dbReference type="SMR" id="A3N559"/>
<dbReference type="KEGG" id="bpd:BURPS668_0427"/>
<dbReference type="HOGENOM" id="CLU_066627_0_0_4"/>
<dbReference type="UniPathway" id="UPA00241">
    <property type="reaction ID" value="UER00352"/>
</dbReference>
<dbReference type="GO" id="GO:0005737">
    <property type="term" value="C:cytoplasm"/>
    <property type="evidence" value="ECO:0007669"/>
    <property type="project" value="UniProtKB-SubCell"/>
</dbReference>
<dbReference type="GO" id="GO:0005524">
    <property type="term" value="F:ATP binding"/>
    <property type="evidence" value="ECO:0007669"/>
    <property type="project" value="UniProtKB-UniRule"/>
</dbReference>
<dbReference type="GO" id="GO:0004594">
    <property type="term" value="F:pantothenate kinase activity"/>
    <property type="evidence" value="ECO:0007669"/>
    <property type="project" value="UniProtKB-UniRule"/>
</dbReference>
<dbReference type="GO" id="GO:0015937">
    <property type="term" value="P:coenzyme A biosynthetic process"/>
    <property type="evidence" value="ECO:0007669"/>
    <property type="project" value="UniProtKB-UniRule"/>
</dbReference>
<dbReference type="CDD" id="cd24015">
    <property type="entry name" value="ASKHA_NBD_PanK-III"/>
    <property type="match status" value="1"/>
</dbReference>
<dbReference type="Gene3D" id="3.30.420.40">
    <property type="match status" value="2"/>
</dbReference>
<dbReference type="HAMAP" id="MF_01274">
    <property type="entry name" value="Pantothen_kinase_3"/>
    <property type="match status" value="1"/>
</dbReference>
<dbReference type="InterPro" id="IPR043129">
    <property type="entry name" value="ATPase_NBD"/>
</dbReference>
<dbReference type="InterPro" id="IPR004619">
    <property type="entry name" value="Type_III_PanK"/>
</dbReference>
<dbReference type="NCBIfam" id="TIGR00671">
    <property type="entry name" value="baf"/>
    <property type="match status" value="1"/>
</dbReference>
<dbReference type="NCBIfam" id="NF009865">
    <property type="entry name" value="PRK13328.1-1"/>
    <property type="match status" value="1"/>
</dbReference>
<dbReference type="NCBIfam" id="NF009868">
    <property type="entry name" value="PRK13328.1-4"/>
    <property type="match status" value="1"/>
</dbReference>
<dbReference type="PANTHER" id="PTHR34265">
    <property type="entry name" value="TYPE III PANTOTHENATE KINASE"/>
    <property type="match status" value="1"/>
</dbReference>
<dbReference type="PANTHER" id="PTHR34265:SF1">
    <property type="entry name" value="TYPE III PANTOTHENATE KINASE"/>
    <property type="match status" value="1"/>
</dbReference>
<dbReference type="Pfam" id="PF03309">
    <property type="entry name" value="Pan_kinase"/>
    <property type="match status" value="1"/>
</dbReference>
<dbReference type="SUPFAM" id="SSF53067">
    <property type="entry name" value="Actin-like ATPase domain"/>
    <property type="match status" value="2"/>
</dbReference>
<name>COAX_BURP6</name>
<feature type="chain" id="PRO_1000054366" description="Type III pantothenate kinase">
    <location>
        <begin position="1"/>
        <end position="256"/>
    </location>
</feature>
<feature type="active site" description="Proton acceptor" evidence="1">
    <location>
        <position position="99"/>
    </location>
</feature>
<feature type="binding site" evidence="1">
    <location>
        <begin position="6"/>
        <end position="13"/>
    </location>
    <ligand>
        <name>ATP</name>
        <dbReference type="ChEBI" id="CHEBI:30616"/>
    </ligand>
</feature>
<feature type="binding site" evidence="1">
    <location>
        <position position="90"/>
    </location>
    <ligand>
        <name>substrate</name>
    </ligand>
</feature>
<feature type="binding site" evidence="1">
    <location>
        <begin position="97"/>
        <end position="100"/>
    </location>
    <ligand>
        <name>substrate</name>
    </ligand>
</feature>
<feature type="binding site" evidence="1">
    <location>
        <position position="123"/>
    </location>
    <ligand>
        <name>ATP</name>
        <dbReference type="ChEBI" id="CHEBI:30616"/>
    </ligand>
</feature>
<feature type="binding site" evidence="1">
    <location>
        <position position="187"/>
    </location>
    <ligand>
        <name>substrate</name>
    </ligand>
</feature>
<sequence>MCLLIDAGNSRIKWALADTARHFVTSGAFEHASDAPDWSTLPAPRGAWISNVAGDAAAARIDALIEARWPALPRTVVRASAAQCGVTNGYAEPARLGSDRWAGLIGAHAAFADEHLLIATFGTATTLEALRADGHFAGGLIAPGWALMMRSLGMHTAQLPTVSIDAATNLLDELAENDAHAPFAIDTPHALSAGCLQAQAGLIERAWRDLEKAWQAPVRLVLSGGAADAIVRALTVPHTRHDTLVLTGLALIAHSA</sequence>
<keyword id="KW-0067">ATP-binding</keyword>
<keyword id="KW-0173">Coenzyme A biosynthesis</keyword>
<keyword id="KW-0963">Cytoplasm</keyword>
<keyword id="KW-0418">Kinase</keyword>
<keyword id="KW-0547">Nucleotide-binding</keyword>
<keyword id="KW-0630">Potassium</keyword>
<keyword id="KW-0808">Transferase</keyword>
<comment type="function">
    <text evidence="1">Catalyzes the phosphorylation of pantothenate (Pan), the first step in CoA biosynthesis.</text>
</comment>
<comment type="catalytic activity">
    <reaction evidence="1">
        <text>(R)-pantothenate + ATP = (R)-4'-phosphopantothenate + ADP + H(+)</text>
        <dbReference type="Rhea" id="RHEA:16373"/>
        <dbReference type="ChEBI" id="CHEBI:10986"/>
        <dbReference type="ChEBI" id="CHEBI:15378"/>
        <dbReference type="ChEBI" id="CHEBI:29032"/>
        <dbReference type="ChEBI" id="CHEBI:30616"/>
        <dbReference type="ChEBI" id="CHEBI:456216"/>
        <dbReference type="EC" id="2.7.1.33"/>
    </reaction>
</comment>
<comment type="cofactor">
    <cofactor evidence="1">
        <name>NH4(+)</name>
        <dbReference type="ChEBI" id="CHEBI:28938"/>
    </cofactor>
    <cofactor evidence="1">
        <name>K(+)</name>
        <dbReference type="ChEBI" id="CHEBI:29103"/>
    </cofactor>
    <text evidence="1">A monovalent cation. Ammonium or potassium.</text>
</comment>
<comment type="pathway">
    <text evidence="1">Cofactor biosynthesis; coenzyme A biosynthesis; CoA from (R)-pantothenate: step 1/5.</text>
</comment>
<comment type="subunit">
    <text evidence="1">Homodimer.</text>
</comment>
<comment type="subcellular location">
    <subcellularLocation>
        <location evidence="1">Cytoplasm</location>
    </subcellularLocation>
</comment>
<comment type="similarity">
    <text evidence="1">Belongs to the type III pantothenate kinase family.</text>
</comment>
<gene>
    <name evidence="1" type="primary">coaX</name>
    <name type="ordered locus">BURPS668_0427</name>
</gene>